<accession>B8D9R4</accession>
<reference key="1">
    <citation type="journal article" date="2009" name="Science">
        <title>The dynamics and time scale of ongoing genomic erosion in symbiotic bacteria.</title>
        <authorList>
            <person name="Moran N.A."/>
            <person name="McLaughlin H.J."/>
            <person name="Sorek R."/>
        </authorList>
    </citation>
    <scope>NUCLEOTIDE SEQUENCE [LARGE SCALE GENOMIC DNA]</scope>
    <source>
        <strain>5A</strain>
    </source>
</reference>
<gene>
    <name type="ordered locus">BUAP5A_481</name>
</gene>
<name>Y481_BUCA5</name>
<evidence type="ECO:0000255" key="1">
    <source>
        <dbReference type="HAMAP-Rule" id="MF_00659"/>
    </source>
</evidence>
<comment type="similarity">
    <text evidence="1">Belongs to the UPF0250 family.</text>
</comment>
<sequence length="87" mass="10136">MKTKLREMLRFPCFFTYKIIGLAQPELIDQIIKVIQIQIPGDYTPQVKSSNRGNYLSVSITICAKNFEQIECLYHEISKINIVRMVL</sequence>
<protein>
    <recommendedName>
        <fullName evidence="1">UPF0250 protein BUAP5A_481</fullName>
    </recommendedName>
</protein>
<feature type="chain" id="PRO_1000200435" description="UPF0250 protein BUAP5A_481">
    <location>
        <begin position="1"/>
        <end position="87"/>
    </location>
</feature>
<proteinExistence type="inferred from homology"/>
<organism>
    <name type="scientific">Buchnera aphidicola subsp. Acyrthosiphon pisum (strain 5A)</name>
    <dbReference type="NCBI Taxonomy" id="563178"/>
    <lineage>
        <taxon>Bacteria</taxon>
        <taxon>Pseudomonadati</taxon>
        <taxon>Pseudomonadota</taxon>
        <taxon>Gammaproteobacteria</taxon>
        <taxon>Enterobacterales</taxon>
        <taxon>Erwiniaceae</taxon>
        <taxon>Buchnera</taxon>
    </lineage>
</organism>
<dbReference type="EMBL" id="CP001161">
    <property type="protein sequence ID" value="ACL30835.1"/>
    <property type="molecule type" value="Genomic_DNA"/>
</dbReference>
<dbReference type="SMR" id="B8D9R4"/>
<dbReference type="KEGG" id="bap:BUAP5A_481"/>
<dbReference type="HOGENOM" id="CLU_161438_2_1_6"/>
<dbReference type="OrthoDB" id="9793424at2"/>
<dbReference type="Proteomes" id="UP000006904">
    <property type="component" value="Chromosome"/>
</dbReference>
<dbReference type="GO" id="GO:0005829">
    <property type="term" value="C:cytosol"/>
    <property type="evidence" value="ECO:0007669"/>
    <property type="project" value="TreeGrafter"/>
</dbReference>
<dbReference type="Gene3D" id="3.30.70.260">
    <property type="match status" value="1"/>
</dbReference>
<dbReference type="HAMAP" id="MF_00659">
    <property type="entry name" value="UPF0250"/>
    <property type="match status" value="1"/>
</dbReference>
<dbReference type="InterPro" id="IPR007454">
    <property type="entry name" value="UPF0250_YbeD-like"/>
</dbReference>
<dbReference type="InterPro" id="IPR027471">
    <property type="entry name" value="YbeD-like_sf"/>
</dbReference>
<dbReference type="NCBIfam" id="NF003447">
    <property type="entry name" value="PRK04998.1"/>
    <property type="match status" value="1"/>
</dbReference>
<dbReference type="PANTHER" id="PTHR38036">
    <property type="entry name" value="UPF0250 PROTEIN YBED"/>
    <property type="match status" value="1"/>
</dbReference>
<dbReference type="PANTHER" id="PTHR38036:SF1">
    <property type="entry name" value="UPF0250 PROTEIN YBED"/>
    <property type="match status" value="1"/>
</dbReference>
<dbReference type="Pfam" id="PF04359">
    <property type="entry name" value="DUF493"/>
    <property type="match status" value="1"/>
</dbReference>
<dbReference type="SUPFAM" id="SSF117991">
    <property type="entry name" value="YbeD/HP0495-like"/>
    <property type="match status" value="1"/>
</dbReference>